<name>ILVD_RHIE6</name>
<gene>
    <name evidence="1" type="primary">ilvD</name>
    <name type="ordered locus">RHECIAT_CH0001779</name>
</gene>
<accession>B3PWV1</accession>
<sequence length="612" mass="65203">MPAYRSRTTTHGRNMAGARGLWRATGMKDSDFGKPIIAVVNSFTQFVPGHVHLKDLGQLVAREIEAAGGVAKEFNTIAVDDGIAMGHDGMLYSLPSRELIADSVEYMVNAHCADAMVCISNCDKITPGMLMASLRLNIPTVFVSGGPMEAGKVVLHGKTHALDLVDAMVAAADDKISDEDVKVIERSACPTCGSCSGMFTANSMNCLTEALGLSLPGNGSTLATHADRKRLFVEAGHLIVDLARRYYEQDDVKALPRTIASKQAFENAMALDIAMGGSTNTVLHILAAAHEGEVDFTMADIDALSRRVPCLSKVAPAKSDVHMEDVHRAGGIMSILGELDKGGLLNRDCPTVHAETLGDAIDRWDITRTNSDTVRNFYRAAPGGIPTQVAFSQEARWDDLDTDRQNGVIRSVEHPFSKDGGLAVLKGNLAIDGCIVKTAGVDESILKFSGPARVFESQDGSVKAILANEVKAGDVVVIRYEGPKGGPGMQEMLYPTSYLKSKGLGKACALITDGRFSGGTSGLSIGHVSPEAANGGTIGLVREGDMIDIDIPNRTISLRVSEAELADRRAEQDGKGWHPTEVRKRNVTTALKAYAAFATSADRGAVRDLNAR</sequence>
<reference key="1">
    <citation type="journal article" date="2010" name="Appl. Environ. Microbiol.">
        <title>Conserved symbiotic plasmid DNA sequences in the multireplicon pangenomic structure of Rhizobium etli.</title>
        <authorList>
            <person name="Gonzalez V."/>
            <person name="Acosta J.L."/>
            <person name="Santamaria R.I."/>
            <person name="Bustos P."/>
            <person name="Fernandez J.L."/>
            <person name="Hernandez Gonzalez I.L."/>
            <person name="Diaz R."/>
            <person name="Flores M."/>
            <person name="Palacios R."/>
            <person name="Mora J."/>
            <person name="Davila G."/>
        </authorList>
    </citation>
    <scope>NUCLEOTIDE SEQUENCE [LARGE SCALE GENOMIC DNA]</scope>
    <source>
        <strain>CIAT 652</strain>
    </source>
</reference>
<comment type="function">
    <text evidence="1">Functions in the biosynthesis of branched-chain amino acids. Catalyzes the dehydration of (2R,3R)-2,3-dihydroxy-3-methylpentanoate (2,3-dihydroxy-3-methylvalerate) into 2-oxo-3-methylpentanoate (2-oxo-3-methylvalerate) and of (2R)-2,3-dihydroxy-3-methylbutanoate (2,3-dihydroxyisovalerate) into 2-oxo-3-methylbutanoate (2-oxoisovalerate), the penultimate precursor to L-isoleucine and L-valine, respectively.</text>
</comment>
<comment type="catalytic activity">
    <reaction evidence="1">
        <text>(2R)-2,3-dihydroxy-3-methylbutanoate = 3-methyl-2-oxobutanoate + H2O</text>
        <dbReference type="Rhea" id="RHEA:24809"/>
        <dbReference type="ChEBI" id="CHEBI:11851"/>
        <dbReference type="ChEBI" id="CHEBI:15377"/>
        <dbReference type="ChEBI" id="CHEBI:49072"/>
        <dbReference type="EC" id="4.2.1.9"/>
    </reaction>
    <physiologicalReaction direction="left-to-right" evidence="1">
        <dbReference type="Rhea" id="RHEA:24810"/>
    </physiologicalReaction>
</comment>
<comment type="catalytic activity">
    <reaction evidence="1">
        <text>(2R,3R)-2,3-dihydroxy-3-methylpentanoate = (S)-3-methyl-2-oxopentanoate + H2O</text>
        <dbReference type="Rhea" id="RHEA:27694"/>
        <dbReference type="ChEBI" id="CHEBI:15377"/>
        <dbReference type="ChEBI" id="CHEBI:35146"/>
        <dbReference type="ChEBI" id="CHEBI:49258"/>
        <dbReference type="EC" id="4.2.1.9"/>
    </reaction>
    <physiologicalReaction direction="left-to-right" evidence="1">
        <dbReference type="Rhea" id="RHEA:27695"/>
    </physiologicalReaction>
</comment>
<comment type="cofactor">
    <cofactor evidence="1">
        <name>[2Fe-2S] cluster</name>
        <dbReference type="ChEBI" id="CHEBI:190135"/>
    </cofactor>
    <text evidence="1">Binds 1 [2Fe-2S] cluster per subunit. This cluster acts as a Lewis acid cofactor.</text>
</comment>
<comment type="cofactor">
    <cofactor evidence="1">
        <name>Mg(2+)</name>
        <dbReference type="ChEBI" id="CHEBI:18420"/>
    </cofactor>
</comment>
<comment type="pathway">
    <text evidence="1">Amino-acid biosynthesis; L-isoleucine biosynthesis; L-isoleucine from 2-oxobutanoate: step 3/4.</text>
</comment>
<comment type="pathway">
    <text evidence="1">Amino-acid biosynthesis; L-valine biosynthesis; L-valine from pyruvate: step 3/4.</text>
</comment>
<comment type="subunit">
    <text evidence="1">Homodimer.</text>
</comment>
<comment type="similarity">
    <text evidence="1">Belongs to the IlvD/Edd family.</text>
</comment>
<feature type="chain" id="PRO_1000089402" description="Dihydroxy-acid dehydratase">
    <location>
        <begin position="1"/>
        <end position="612"/>
    </location>
</feature>
<feature type="active site" description="Proton acceptor" evidence="1">
    <location>
        <position position="517"/>
    </location>
</feature>
<feature type="binding site" evidence="1">
    <location>
        <position position="81"/>
    </location>
    <ligand>
        <name>Mg(2+)</name>
        <dbReference type="ChEBI" id="CHEBI:18420"/>
    </ligand>
</feature>
<feature type="binding site" evidence="1">
    <location>
        <position position="122"/>
    </location>
    <ligand>
        <name>[2Fe-2S] cluster</name>
        <dbReference type="ChEBI" id="CHEBI:190135"/>
    </ligand>
</feature>
<feature type="binding site" evidence="1">
    <location>
        <position position="123"/>
    </location>
    <ligand>
        <name>Mg(2+)</name>
        <dbReference type="ChEBI" id="CHEBI:18420"/>
    </ligand>
</feature>
<feature type="binding site" description="via carbamate group" evidence="1">
    <location>
        <position position="124"/>
    </location>
    <ligand>
        <name>Mg(2+)</name>
        <dbReference type="ChEBI" id="CHEBI:18420"/>
    </ligand>
</feature>
<feature type="binding site" evidence="1">
    <location>
        <position position="195"/>
    </location>
    <ligand>
        <name>[2Fe-2S] cluster</name>
        <dbReference type="ChEBI" id="CHEBI:190135"/>
    </ligand>
</feature>
<feature type="binding site" evidence="1">
    <location>
        <position position="491"/>
    </location>
    <ligand>
        <name>Mg(2+)</name>
        <dbReference type="ChEBI" id="CHEBI:18420"/>
    </ligand>
</feature>
<feature type="modified residue" description="N6-carboxylysine" evidence="1">
    <location>
        <position position="124"/>
    </location>
</feature>
<organism>
    <name type="scientific">Rhizobium etli (strain CIAT 652)</name>
    <dbReference type="NCBI Taxonomy" id="491916"/>
    <lineage>
        <taxon>Bacteria</taxon>
        <taxon>Pseudomonadati</taxon>
        <taxon>Pseudomonadota</taxon>
        <taxon>Alphaproteobacteria</taxon>
        <taxon>Hyphomicrobiales</taxon>
        <taxon>Rhizobiaceae</taxon>
        <taxon>Rhizobium/Agrobacterium group</taxon>
        <taxon>Rhizobium</taxon>
    </lineage>
</organism>
<dbReference type="EC" id="4.2.1.9" evidence="1"/>
<dbReference type="EMBL" id="CP001074">
    <property type="protein sequence ID" value="ACE90749.1"/>
    <property type="molecule type" value="Genomic_DNA"/>
</dbReference>
<dbReference type="SMR" id="B3PWV1"/>
<dbReference type="KEGG" id="rec:RHECIAT_CH0001779"/>
<dbReference type="eggNOG" id="COG0129">
    <property type="taxonomic scope" value="Bacteria"/>
</dbReference>
<dbReference type="HOGENOM" id="CLU_014271_4_2_5"/>
<dbReference type="UniPathway" id="UPA00047">
    <property type="reaction ID" value="UER00057"/>
</dbReference>
<dbReference type="UniPathway" id="UPA00049">
    <property type="reaction ID" value="UER00061"/>
</dbReference>
<dbReference type="Proteomes" id="UP000008817">
    <property type="component" value="Chromosome"/>
</dbReference>
<dbReference type="GO" id="GO:0005829">
    <property type="term" value="C:cytosol"/>
    <property type="evidence" value="ECO:0007669"/>
    <property type="project" value="TreeGrafter"/>
</dbReference>
<dbReference type="GO" id="GO:0051537">
    <property type="term" value="F:2 iron, 2 sulfur cluster binding"/>
    <property type="evidence" value="ECO:0007669"/>
    <property type="project" value="UniProtKB-UniRule"/>
</dbReference>
<dbReference type="GO" id="GO:0004160">
    <property type="term" value="F:dihydroxy-acid dehydratase activity"/>
    <property type="evidence" value="ECO:0007669"/>
    <property type="project" value="UniProtKB-UniRule"/>
</dbReference>
<dbReference type="GO" id="GO:0000287">
    <property type="term" value="F:magnesium ion binding"/>
    <property type="evidence" value="ECO:0007669"/>
    <property type="project" value="UniProtKB-UniRule"/>
</dbReference>
<dbReference type="GO" id="GO:0009097">
    <property type="term" value="P:isoleucine biosynthetic process"/>
    <property type="evidence" value="ECO:0007669"/>
    <property type="project" value="UniProtKB-UniRule"/>
</dbReference>
<dbReference type="GO" id="GO:0009099">
    <property type="term" value="P:L-valine biosynthetic process"/>
    <property type="evidence" value="ECO:0007669"/>
    <property type="project" value="UniProtKB-UniRule"/>
</dbReference>
<dbReference type="FunFam" id="3.50.30.80:FF:000001">
    <property type="entry name" value="Dihydroxy-acid dehydratase"/>
    <property type="match status" value="1"/>
</dbReference>
<dbReference type="Gene3D" id="3.50.30.80">
    <property type="entry name" value="IlvD/EDD C-terminal domain-like"/>
    <property type="match status" value="1"/>
</dbReference>
<dbReference type="HAMAP" id="MF_00012">
    <property type="entry name" value="IlvD"/>
    <property type="match status" value="1"/>
</dbReference>
<dbReference type="InterPro" id="IPR042096">
    <property type="entry name" value="Dihydro-acid_dehy_C"/>
</dbReference>
<dbReference type="InterPro" id="IPR004404">
    <property type="entry name" value="DihydroxyA_deHydtase"/>
</dbReference>
<dbReference type="InterPro" id="IPR020558">
    <property type="entry name" value="DiOHA_6PGluconate_deHydtase_CS"/>
</dbReference>
<dbReference type="InterPro" id="IPR056740">
    <property type="entry name" value="ILV_EDD_C"/>
</dbReference>
<dbReference type="InterPro" id="IPR000581">
    <property type="entry name" value="ILV_EDD_N"/>
</dbReference>
<dbReference type="InterPro" id="IPR037237">
    <property type="entry name" value="IlvD/EDD_N"/>
</dbReference>
<dbReference type="NCBIfam" id="TIGR00110">
    <property type="entry name" value="ilvD"/>
    <property type="match status" value="1"/>
</dbReference>
<dbReference type="NCBIfam" id="NF009103">
    <property type="entry name" value="PRK12448.1"/>
    <property type="match status" value="1"/>
</dbReference>
<dbReference type="PANTHER" id="PTHR43661">
    <property type="entry name" value="D-XYLONATE DEHYDRATASE"/>
    <property type="match status" value="1"/>
</dbReference>
<dbReference type="PANTHER" id="PTHR43661:SF3">
    <property type="entry name" value="D-XYLONATE DEHYDRATASE YAGF-RELATED"/>
    <property type="match status" value="1"/>
</dbReference>
<dbReference type="Pfam" id="PF24877">
    <property type="entry name" value="ILV_EDD_C"/>
    <property type="match status" value="1"/>
</dbReference>
<dbReference type="Pfam" id="PF00920">
    <property type="entry name" value="ILVD_EDD_N"/>
    <property type="match status" value="1"/>
</dbReference>
<dbReference type="SUPFAM" id="SSF143975">
    <property type="entry name" value="IlvD/EDD N-terminal domain-like"/>
    <property type="match status" value="1"/>
</dbReference>
<dbReference type="SUPFAM" id="SSF52016">
    <property type="entry name" value="LeuD/IlvD-like"/>
    <property type="match status" value="1"/>
</dbReference>
<dbReference type="PROSITE" id="PS00886">
    <property type="entry name" value="ILVD_EDD_1"/>
    <property type="match status" value="1"/>
</dbReference>
<dbReference type="PROSITE" id="PS00887">
    <property type="entry name" value="ILVD_EDD_2"/>
    <property type="match status" value="1"/>
</dbReference>
<proteinExistence type="inferred from homology"/>
<keyword id="KW-0001">2Fe-2S</keyword>
<keyword id="KW-0028">Amino-acid biosynthesis</keyword>
<keyword id="KW-0100">Branched-chain amino acid biosynthesis</keyword>
<keyword id="KW-0408">Iron</keyword>
<keyword id="KW-0411">Iron-sulfur</keyword>
<keyword id="KW-0456">Lyase</keyword>
<keyword id="KW-0460">Magnesium</keyword>
<keyword id="KW-0479">Metal-binding</keyword>
<evidence type="ECO:0000255" key="1">
    <source>
        <dbReference type="HAMAP-Rule" id="MF_00012"/>
    </source>
</evidence>
<protein>
    <recommendedName>
        <fullName evidence="1">Dihydroxy-acid dehydratase</fullName>
        <shortName evidence="1">DAD</shortName>
        <ecNumber evidence="1">4.2.1.9</ecNumber>
    </recommendedName>
</protein>